<reference key="1">
    <citation type="submission" date="2006-10" db="EMBL/GenBank/DDBJ databases">
        <authorList>
            <person name="Fleischmann R.D."/>
            <person name="Dodson R.J."/>
            <person name="Haft D.H."/>
            <person name="Merkel J.S."/>
            <person name="Nelson W.C."/>
            <person name="Fraser C.M."/>
        </authorList>
    </citation>
    <scope>NUCLEOTIDE SEQUENCE [LARGE SCALE GENOMIC DNA]</scope>
    <source>
        <strain>ATCC 700084 / mc(2)155</strain>
    </source>
</reference>
<reference key="2">
    <citation type="journal article" date="2007" name="Genome Biol.">
        <title>Interrupted coding sequences in Mycobacterium smegmatis: authentic mutations or sequencing errors?</title>
        <authorList>
            <person name="Deshayes C."/>
            <person name="Perrodou E."/>
            <person name="Gallien S."/>
            <person name="Euphrasie D."/>
            <person name="Schaeffer C."/>
            <person name="Van-Dorsselaer A."/>
            <person name="Poch O."/>
            <person name="Lecompte O."/>
            <person name="Reyrat J.-M."/>
        </authorList>
    </citation>
    <scope>NUCLEOTIDE SEQUENCE [LARGE SCALE GENOMIC DNA]</scope>
    <source>
        <strain>ATCC 700084 / mc(2)155</strain>
    </source>
</reference>
<reference key="3">
    <citation type="journal article" date="2009" name="Genome Res.">
        <title>Ortho-proteogenomics: multiple proteomes investigation through orthology and a new MS-based protocol.</title>
        <authorList>
            <person name="Gallien S."/>
            <person name="Perrodou E."/>
            <person name="Carapito C."/>
            <person name="Deshayes C."/>
            <person name="Reyrat J.-M."/>
            <person name="Van Dorsselaer A."/>
            <person name="Poch O."/>
            <person name="Schaeffer C."/>
            <person name="Lecompte O."/>
        </authorList>
    </citation>
    <scope>NUCLEOTIDE SEQUENCE [LARGE SCALE GENOMIC DNA]</scope>
    <source>
        <strain>ATCC 700084 / mc(2)155</strain>
    </source>
</reference>
<gene>
    <name type="ordered locus">MSMEG_6921</name>
    <name type="ordered locus">MSMEI_6732</name>
</gene>
<keyword id="KW-1185">Reference proteome</keyword>
<accession>A0R7H8</accession>
<accession>I7FW04</accession>
<name>Y6921_MYCS2</name>
<feature type="chain" id="PRO_1000046663" description="UPF0301 protein MSMEG_6921/MSMEI_6732">
    <location>
        <begin position="1"/>
        <end position="201"/>
    </location>
</feature>
<evidence type="ECO:0000255" key="1">
    <source>
        <dbReference type="HAMAP-Rule" id="MF_00758"/>
    </source>
</evidence>
<comment type="similarity">
    <text evidence="1">Belongs to the UPF0301 (AlgH) family.</text>
</comment>
<sequence length="201" mass="22094">MAQSEDPEDFIAPAAHRVRPGTLLLANTDLLEPTFRRTVIYIVEHNSGGTLGVILNRPSETAVYNVLPQWAEVTAKPKTMFIGGPVKRDSALCLATLRVGMQADGVDGLRHVQGRVVMVDLDADPEELAPVIEGVRIFAGYSGWTTGQLDGEIERDDWIVLSALPSDVLIEPRIDLWGRVLRRQPLPMSLLATHPIDVSRN</sequence>
<proteinExistence type="inferred from homology"/>
<dbReference type="EMBL" id="CP000480">
    <property type="protein sequence ID" value="ABK74759.1"/>
    <property type="molecule type" value="Genomic_DNA"/>
</dbReference>
<dbReference type="EMBL" id="CP001663">
    <property type="protein sequence ID" value="AFP43158.1"/>
    <property type="molecule type" value="Genomic_DNA"/>
</dbReference>
<dbReference type="RefSeq" id="WP_003898342.1">
    <property type="nucleotide sequence ID" value="NZ_SIJM01000001.1"/>
</dbReference>
<dbReference type="RefSeq" id="YP_891116.1">
    <property type="nucleotide sequence ID" value="NC_008596.1"/>
</dbReference>
<dbReference type="SMR" id="A0R7H8"/>
<dbReference type="STRING" id="246196.MSMEG_6921"/>
<dbReference type="PaxDb" id="246196-MSMEI_6732"/>
<dbReference type="KEGG" id="msb:LJ00_34175"/>
<dbReference type="KEGG" id="msg:MSMEI_6732"/>
<dbReference type="KEGG" id="msm:MSMEG_6921"/>
<dbReference type="PATRIC" id="fig|246196.19.peg.6737"/>
<dbReference type="eggNOG" id="COG1678">
    <property type="taxonomic scope" value="Bacteria"/>
</dbReference>
<dbReference type="OrthoDB" id="9807486at2"/>
<dbReference type="Proteomes" id="UP000000757">
    <property type="component" value="Chromosome"/>
</dbReference>
<dbReference type="Proteomes" id="UP000006158">
    <property type="component" value="Chromosome"/>
</dbReference>
<dbReference type="GO" id="GO:0005829">
    <property type="term" value="C:cytosol"/>
    <property type="evidence" value="ECO:0007669"/>
    <property type="project" value="TreeGrafter"/>
</dbReference>
<dbReference type="Gene3D" id="3.40.1740.10">
    <property type="entry name" value="VC0467-like"/>
    <property type="match status" value="1"/>
</dbReference>
<dbReference type="HAMAP" id="MF_00758">
    <property type="entry name" value="UPF0301"/>
    <property type="match status" value="1"/>
</dbReference>
<dbReference type="InterPro" id="IPR003774">
    <property type="entry name" value="AlgH-like"/>
</dbReference>
<dbReference type="NCBIfam" id="NF001269">
    <property type="entry name" value="PRK00228.2-1"/>
    <property type="match status" value="1"/>
</dbReference>
<dbReference type="NCBIfam" id="NF001272">
    <property type="entry name" value="PRK00228.2-4"/>
    <property type="match status" value="1"/>
</dbReference>
<dbReference type="PANTHER" id="PTHR30327">
    <property type="entry name" value="UNCHARACTERIZED PROTEIN YQGE"/>
    <property type="match status" value="1"/>
</dbReference>
<dbReference type="PANTHER" id="PTHR30327:SF1">
    <property type="entry name" value="UPF0301 PROTEIN YQGE"/>
    <property type="match status" value="1"/>
</dbReference>
<dbReference type="Pfam" id="PF02622">
    <property type="entry name" value="DUF179"/>
    <property type="match status" value="1"/>
</dbReference>
<dbReference type="SUPFAM" id="SSF143456">
    <property type="entry name" value="VC0467-like"/>
    <property type="match status" value="1"/>
</dbReference>
<organism>
    <name type="scientific">Mycolicibacterium smegmatis (strain ATCC 700084 / mc(2)155)</name>
    <name type="common">Mycobacterium smegmatis</name>
    <dbReference type="NCBI Taxonomy" id="246196"/>
    <lineage>
        <taxon>Bacteria</taxon>
        <taxon>Bacillati</taxon>
        <taxon>Actinomycetota</taxon>
        <taxon>Actinomycetes</taxon>
        <taxon>Mycobacteriales</taxon>
        <taxon>Mycobacteriaceae</taxon>
        <taxon>Mycolicibacterium</taxon>
    </lineage>
</organism>
<protein>
    <recommendedName>
        <fullName evidence="1">UPF0301 protein MSMEG_6921/MSMEI_6732</fullName>
    </recommendedName>
</protein>